<proteinExistence type="inferred from homology"/>
<gene>
    <name evidence="1" type="primary">trpF</name>
    <name type="ordered locus">BCA_1281</name>
</gene>
<feature type="chain" id="PRO_1000197075" description="N-(5'-phosphoribosyl)anthranilate isomerase">
    <location>
        <begin position="1"/>
        <end position="204"/>
    </location>
</feature>
<evidence type="ECO:0000255" key="1">
    <source>
        <dbReference type="HAMAP-Rule" id="MF_00135"/>
    </source>
</evidence>
<keyword id="KW-0028">Amino-acid biosynthesis</keyword>
<keyword id="KW-0057">Aromatic amino acid biosynthesis</keyword>
<keyword id="KW-0413">Isomerase</keyword>
<keyword id="KW-0822">Tryptophan biosynthesis</keyword>
<comment type="catalytic activity">
    <reaction evidence="1">
        <text>N-(5-phospho-beta-D-ribosyl)anthranilate = 1-(2-carboxyphenylamino)-1-deoxy-D-ribulose 5-phosphate</text>
        <dbReference type="Rhea" id="RHEA:21540"/>
        <dbReference type="ChEBI" id="CHEBI:18277"/>
        <dbReference type="ChEBI" id="CHEBI:58613"/>
        <dbReference type="EC" id="5.3.1.24"/>
    </reaction>
</comment>
<comment type="pathway">
    <text evidence="1">Amino-acid biosynthesis; L-tryptophan biosynthesis; L-tryptophan from chorismate: step 3/5.</text>
</comment>
<comment type="similarity">
    <text evidence="1">Belongs to the TrpF family.</text>
</comment>
<protein>
    <recommendedName>
        <fullName evidence="1">N-(5'-phosphoribosyl)anthranilate isomerase</fullName>
        <shortName evidence="1">PRAI</shortName>
        <ecNumber evidence="1">5.3.1.24</ecNumber>
    </recommendedName>
</protein>
<organism>
    <name type="scientific">Bacillus cereus (strain 03BB102)</name>
    <dbReference type="NCBI Taxonomy" id="572264"/>
    <lineage>
        <taxon>Bacteria</taxon>
        <taxon>Bacillati</taxon>
        <taxon>Bacillota</taxon>
        <taxon>Bacilli</taxon>
        <taxon>Bacillales</taxon>
        <taxon>Bacillaceae</taxon>
        <taxon>Bacillus</taxon>
        <taxon>Bacillus cereus group</taxon>
    </lineage>
</organism>
<accession>C1ELE9</accession>
<dbReference type="EC" id="5.3.1.24" evidence="1"/>
<dbReference type="EMBL" id="CP001407">
    <property type="protein sequence ID" value="ACO26870.1"/>
    <property type="molecule type" value="Genomic_DNA"/>
</dbReference>
<dbReference type="RefSeq" id="WP_000865106.1">
    <property type="nucleotide sequence ID" value="NZ_CP009318.1"/>
</dbReference>
<dbReference type="SMR" id="C1ELE9"/>
<dbReference type="KEGG" id="bcx:BCA_1281"/>
<dbReference type="PATRIC" id="fig|572264.18.peg.1232"/>
<dbReference type="UniPathway" id="UPA00035">
    <property type="reaction ID" value="UER00042"/>
</dbReference>
<dbReference type="Proteomes" id="UP000002210">
    <property type="component" value="Chromosome"/>
</dbReference>
<dbReference type="GO" id="GO:0004640">
    <property type="term" value="F:phosphoribosylanthranilate isomerase activity"/>
    <property type="evidence" value="ECO:0007669"/>
    <property type="project" value="UniProtKB-UniRule"/>
</dbReference>
<dbReference type="GO" id="GO:0000162">
    <property type="term" value="P:L-tryptophan biosynthetic process"/>
    <property type="evidence" value="ECO:0007669"/>
    <property type="project" value="UniProtKB-UniRule"/>
</dbReference>
<dbReference type="CDD" id="cd00405">
    <property type="entry name" value="PRAI"/>
    <property type="match status" value="1"/>
</dbReference>
<dbReference type="FunFam" id="3.20.20.70:FF:000075">
    <property type="entry name" value="Tryptophan biosynthesis protein TRP1"/>
    <property type="match status" value="1"/>
</dbReference>
<dbReference type="Gene3D" id="3.20.20.70">
    <property type="entry name" value="Aldolase class I"/>
    <property type="match status" value="1"/>
</dbReference>
<dbReference type="HAMAP" id="MF_00135">
    <property type="entry name" value="PRAI"/>
    <property type="match status" value="1"/>
</dbReference>
<dbReference type="InterPro" id="IPR013785">
    <property type="entry name" value="Aldolase_TIM"/>
</dbReference>
<dbReference type="InterPro" id="IPR001240">
    <property type="entry name" value="PRAI_dom"/>
</dbReference>
<dbReference type="InterPro" id="IPR011060">
    <property type="entry name" value="RibuloseP-bd_barrel"/>
</dbReference>
<dbReference type="InterPro" id="IPR044643">
    <property type="entry name" value="TrpF_fam"/>
</dbReference>
<dbReference type="NCBIfam" id="NF002297">
    <property type="entry name" value="PRK01222.1-3"/>
    <property type="match status" value="1"/>
</dbReference>
<dbReference type="PANTHER" id="PTHR42894">
    <property type="entry name" value="N-(5'-PHOSPHORIBOSYL)ANTHRANILATE ISOMERASE"/>
    <property type="match status" value="1"/>
</dbReference>
<dbReference type="PANTHER" id="PTHR42894:SF1">
    <property type="entry name" value="N-(5'-PHOSPHORIBOSYL)ANTHRANILATE ISOMERASE"/>
    <property type="match status" value="1"/>
</dbReference>
<dbReference type="Pfam" id="PF00697">
    <property type="entry name" value="PRAI"/>
    <property type="match status" value="1"/>
</dbReference>
<dbReference type="SUPFAM" id="SSF51366">
    <property type="entry name" value="Ribulose-phoshate binding barrel"/>
    <property type="match status" value="1"/>
</dbReference>
<name>TRPF_BACC3</name>
<sequence length="204" mass="22691">MKVKICGITDMETAKRACEYGADALGFVFAESKRKITPGLAKEIIQELPANVLKIGVFVNESVEVIQKITENCGLTHVQLHGGEDNHQIRRLNIPSIKSLGVTSESDMKNAQGYETDYILFDSPKEKFHGGNGKTFPWELLAHMPKELREKTILAGGLNTLNIEEAIRTVRPYMVDVSSGVETEGKKDVEKIKQFIIKAKECSK</sequence>
<reference key="1">
    <citation type="submission" date="2009-02" db="EMBL/GenBank/DDBJ databases">
        <title>Genome sequence of Bacillus cereus 03BB102.</title>
        <authorList>
            <person name="Dodson R.J."/>
            <person name="Jackson P."/>
            <person name="Munk A.C."/>
            <person name="Brettin T."/>
            <person name="Bruce D."/>
            <person name="Detter C."/>
            <person name="Tapia R."/>
            <person name="Han C."/>
            <person name="Sutton G."/>
            <person name="Sims D."/>
        </authorList>
    </citation>
    <scope>NUCLEOTIDE SEQUENCE [LARGE SCALE GENOMIC DNA]</scope>
    <source>
        <strain>03BB102</strain>
    </source>
</reference>